<protein>
    <recommendedName>
        <fullName>Uncharacterized protein Rv2308</fullName>
    </recommendedName>
</protein>
<feature type="chain" id="PRO_0000104017" description="Uncharacterized protein Rv2308">
    <location>
        <begin position="1"/>
        <end position="238"/>
    </location>
</feature>
<name>Y2308_MYCTU</name>
<keyword id="KW-1185">Reference proteome</keyword>
<proteinExistence type="predicted"/>
<dbReference type="EMBL" id="AL123456">
    <property type="protein sequence ID" value="CCP45094.1"/>
    <property type="molecule type" value="Genomic_DNA"/>
</dbReference>
<dbReference type="PIR" id="H70734">
    <property type="entry name" value="H70734"/>
</dbReference>
<dbReference type="RefSeq" id="NP_216824.1">
    <property type="nucleotide sequence ID" value="NC_000962.3"/>
</dbReference>
<dbReference type="RefSeq" id="WP_003411885.1">
    <property type="nucleotide sequence ID" value="NZ_NVQJ01000012.1"/>
</dbReference>
<dbReference type="SMR" id="P9WLC5"/>
<dbReference type="STRING" id="83332.Rv2308"/>
<dbReference type="PaxDb" id="83332-Rv2308"/>
<dbReference type="DNASU" id="885290"/>
<dbReference type="GeneID" id="885290"/>
<dbReference type="KEGG" id="mtu:Rv2308"/>
<dbReference type="KEGG" id="mtv:RVBD_2308"/>
<dbReference type="TubercuList" id="Rv2308"/>
<dbReference type="eggNOG" id="COG2442">
    <property type="taxonomic scope" value="Bacteria"/>
</dbReference>
<dbReference type="InParanoid" id="P9WLC5"/>
<dbReference type="OrthoDB" id="3699668at2"/>
<dbReference type="PhylomeDB" id="P9WLC5"/>
<dbReference type="Proteomes" id="UP000001584">
    <property type="component" value="Chromosome"/>
</dbReference>
<dbReference type="Gene3D" id="1.10.10.10">
    <property type="entry name" value="Winged helix-like DNA-binding domain superfamily/Winged helix DNA-binding domain"/>
    <property type="match status" value="1"/>
</dbReference>
<dbReference type="InterPro" id="IPR007367">
    <property type="entry name" value="DUF433"/>
</dbReference>
<dbReference type="InterPro" id="IPR009057">
    <property type="entry name" value="Homeodomain-like_sf"/>
</dbReference>
<dbReference type="InterPro" id="IPR017277">
    <property type="entry name" value="VapB45-like"/>
</dbReference>
<dbReference type="InterPro" id="IPR036388">
    <property type="entry name" value="WH-like_DNA-bd_sf"/>
</dbReference>
<dbReference type="Pfam" id="PF04255">
    <property type="entry name" value="DUF433"/>
    <property type="match status" value="1"/>
</dbReference>
<dbReference type="PIRSF" id="PIRSF037738">
    <property type="entry name" value="UCP037738"/>
    <property type="match status" value="1"/>
</dbReference>
<dbReference type="SUPFAM" id="SSF46689">
    <property type="entry name" value="Homeodomain-like"/>
    <property type="match status" value="1"/>
</dbReference>
<reference key="1">
    <citation type="journal article" date="1998" name="Nature">
        <title>Deciphering the biology of Mycobacterium tuberculosis from the complete genome sequence.</title>
        <authorList>
            <person name="Cole S.T."/>
            <person name="Brosch R."/>
            <person name="Parkhill J."/>
            <person name="Garnier T."/>
            <person name="Churcher C.M."/>
            <person name="Harris D.E."/>
            <person name="Gordon S.V."/>
            <person name="Eiglmeier K."/>
            <person name="Gas S."/>
            <person name="Barry C.E. III"/>
            <person name="Tekaia F."/>
            <person name="Badcock K."/>
            <person name="Basham D."/>
            <person name="Brown D."/>
            <person name="Chillingworth T."/>
            <person name="Connor R."/>
            <person name="Davies R.M."/>
            <person name="Devlin K."/>
            <person name="Feltwell T."/>
            <person name="Gentles S."/>
            <person name="Hamlin N."/>
            <person name="Holroyd S."/>
            <person name="Hornsby T."/>
            <person name="Jagels K."/>
            <person name="Krogh A."/>
            <person name="McLean J."/>
            <person name="Moule S."/>
            <person name="Murphy L.D."/>
            <person name="Oliver S."/>
            <person name="Osborne J."/>
            <person name="Quail M.A."/>
            <person name="Rajandream M.A."/>
            <person name="Rogers J."/>
            <person name="Rutter S."/>
            <person name="Seeger K."/>
            <person name="Skelton S."/>
            <person name="Squares S."/>
            <person name="Squares R."/>
            <person name="Sulston J.E."/>
            <person name="Taylor K."/>
            <person name="Whitehead S."/>
            <person name="Barrell B.G."/>
        </authorList>
    </citation>
    <scope>NUCLEOTIDE SEQUENCE [LARGE SCALE GENOMIC DNA]</scope>
    <source>
        <strain>ATCC 25618 / H37Rv</strain>
    </source>
</reference>
<accession>P9WLC5</accession>
<accession>L0T989</accession>
<accession>Q50657</accession>
<gene>
    <name type="ordered locus">Rv2308</name>
    <name type="ORF">MTCY339.01c</name>
</gene>
<organism>
    <name type="scientific">Mycobacterium tuberculosis (strain ATCC 25618 / H37Rv)</name>
    <dbReference type="NCBI Taxonomy" id="83332"/>
    <lineage>
        <taxon>Bacteria</taxon>
        <taxon>Bacillati</taxon>
        <taxon>Actinomycetota</taxon>
        <taxon>Actinomycetes</taxon>
        <taxon>Mycobacteriales</taxon>
        <taxon>Mycobacteriaceae</taxon>
        <taxon>Mycobacterium</taxon>
        <taxon>Mycobacterium tuberculosis complex</taxon>
    </lineage>
</organism>
<sequence length="238" mass="26689">MRADMSVTSMLDREVYVYAEVDKLIGLPAGTAKRWINGYERGGKDHPPILRVTPGATPWVTWGEFVETRMLAEYRDRRKVPIVRQRAAIEELRARFNLRYPLAHLRPFLSTHERDLTMGGEEIGLPDAEVTIRTGQALLGDARWLASIATPGRDEVGEAVIVELPVDKAFPEIVINPSRYSGQPTFVGRRVSPVTIAQMVDGGEEREDLAADYGLSLKQIQDAIDYTKKYRLARLVAA</sequence>